<name>PDXB_BACFR</name>
<accession>Q64ZV5</accession>
<dbReference type="EC" id="1.1.1.290" evidence="1"/>
<dbReference type="EMBL" id="AP006841">
    <property type="protein sequence ID" value="BAD46971.1"/>
    <property type="molecule type" value="Genomic_DNA"/>
</dbReference>
<dbReference type="RefSeq" id="WP_011201894.1">
    <property type="nucleotide sequence ID" value="NC_006347.1"/>
</dbReference>
<dbReference type="RefSeq" id="YP_097505.1">
    <property type="nucleotide sequence ID" value="NC_006347.1"/>
</dbReference>
<dbReference type="SMR" id="Q64ZV5"/>
<dbReference type="STRING" id="295405.BF0222"/>
<dbReference type="KEGG" id="bfr:BF0222"/>
<dbReference type="PATRIC" id="fig|295405.11.peg.252"/>
<dbReference type="HOGENOM" id="CLU_019796_4_0_10"/>
<dbReference type="OrthoDB" id="1522997at2"/>
<dbReference type="UniPathway" id="UPA00244">
    <property type="reaction ID" value="UER00310"/>
</dbReference>
<dbReference type="Proteomes" id="UP000002197">
    <property type="component" value="Chromosome"/>
</dbReference>
<dbReference type="GO" id="GO:0005829">
    <property type="term" value="C:cytosol"/>
    <property type="evidence" value="ECO:0007669"/>
    <property type="project" value="TreeGrafter"/>
</dbReference>
<dbReference type="GO" id="GO:0033711">
    <property type="term" value="F:4-phosphoerythronate dehydrogenase activity"/>
    <property type="evidence" value="ECO:0007669"/>
    <property type="project" value="UniProtKB-EC"/>
</dbReference>
<dbReference type="GO" id="GO:0030267">
    <property type="term" value="F:glyoxylate reductase (NADPH) activity"/>
    <property type="evidence" value="ECO:0007669"/>
    <property type="project" value="TreeGrafter"/>
</dbReference>
<dbReference type="GO" id="GO:0016618">
    <property type="term" value="F:hydroxypyruvate reductase [NAD(P)H] activity"/>
    <property type="evidence" value="ECO:0007669"/>
    <property type="project" value="TreeGrafter"/>
</dbReference>
<dbReference type="GO" id="GO:0051287">
    <property type="term" value="F:NAD binding"/>
    <property type="evidence" value="ECO:0007669"/>
    <property type="project" value="InterPro"/>
</dbReference>
<dbReference type="GO" id="GO:0046983">
    <property type="term" value="F:protein dimerization activity"/>
    <property type="evidence" value="ECO:0007669"/>
    <property type="project" value="InterPro"/>
</dbReference>
<dbReference type="GO" id="GO:0008615">
    <property type="term" value="P:pyridoxine biosynthetic process"/>
    <property type="evidence" value="ECO:0007669"/>
    <property type="project" value="UniProtKB-UniRule"/>
</dbReference>
<dbReference type="CDD" id="cd12158">
    <property type="entry name" value="ErythrP_dh"/>
    <property type="match status" value="1"/>
</dbReference>
<dbReference type="Gene3D" id="3.30.1370.170">
    <property type="match status" value="1"/>
</dbReference>
<dbReference type="Gene3D" id="3.40.50.720">
    <property type="entry name" value="NAD(P)-binding Rossmann-like Domain"/>
    <property type="match status" value="2"/>
</dbReference>
<dbReference type="HAMAP" id="MF_01825">
    <property type="entry name" value="PdxB"/>
    <property type="match status" value="1"/>
</dbReference>
<dbReference type="InterPro" id="IPR050223">
    <property type="entry name" value="D-isomer_2-hydroxyacid_DH"/>
</dbReference>
<dbReference type="InterPro" id="IPR006139">
    <property type="entry name" value="D-isomer_2_OHA_DH_cat_dom"/>
</dbReference>
<dbReference type="InterPro" id="IPR029753">
    <property type="entry name" value="D-isomer_DH_CS"/>
</dbReference>
<dbReference type="InterPro" id="IPR006140">
    <property type="entry name" value="D-isomer_DH_NAD-bd"/>
</dbReference>
<dbReference type="InterPro" id="IPR020921">
    <property type="entry name" value="Erythronate-4-P_DHase"/>
</dbReference>
<dbReference type="InterPro" id="IPR024531">
    <property type="entry name" value="Erythronate-4-P_DHase_dimer"/>
</dbReference>
<dbReference type="InterPro" id="IPR036291">
    <property type="entry name" value="NAD(P)-bd_dom_sf"/>
</dbReference>
<dbReference type="InterPro" id="IPR038251">
    <property type="entry name" value="PdxB_dimer_sf"/>
</dbReference>
<dbReference type="NCBIfam" id="NF001309">
    <property type="entry name" value="PRK00257.1"/>
    <property type="match status" value="1"/>
</dbReference>
<dbReference type="PANTHER" id="PTHR10996">
    <property type="entry name" value="2-HYDROXYACID DEHYDROGENASE-RELATED"/>
    <property type="match status" value="1"/>
</dbReference>
<dbReference type="PANTHER" id="PTHR10996:SF283">
    <property type="entry name" value="GLYOXYLATE_HYDROXYPYRUVATE REDUCTASE B"/>
    <property type="match status" value="1"/>
</dbReference>
<dbReference type="Pfam" id="PF00389">
    <property type="entry name" value="2-Hacid_dh"/>
    <property type="match status" value="1"/>
</dbReference>
<dbReference type="Pfam" id="PF02826">
    <property type="entry name" value="2-Hacid_dh_C"/>
    <property type="match status" value="1"/>
</dbReference>
<dbReference type="Pfam" id="PF11890">
    <property type="entry name" value="DUF3410"/>
    <property type="match status" value="1"/>
</dbReference>
<dbReference type="SUPFAM" id="SSF52283">
    <property type="entry name" value="Formate/glycerate dehydrogenase catalytic domain-like"/>
    <property type="match status" value="1"/>
</dbReference>
<dbReference type="SUPFAM" id="SSF51735">
    <property type="entry name" value="NAD(P)-binding Rossmann-fold domains"/>
    <property type="match status" value="1"/>
</dbReference>
<dbReference type="PROSITE" id="PS00671">
    <property type="entry name" value="D_2_HYDROXYACID_DH_3"/>
    <property type="match status" value="1"/>
</dbReference>
<keyword id="KW-0963">Cytoplasm</keyword>
<keyword id="KW-0520">NAD</keyword>
<keyword id="KW-0560">Oxidoreductase</keyword>
<keyword id="KW-0664">Pyridoxine biosynthesis</keyword>
<evidence type="ECO:0000255" key="1">
    <source>
        <dbReference type="HAMAP-Rule" id="MF_01825"/>
    </source>
</evidence>
<protein>
    <recommendedName>
        <fullName evidence="1">Erythronate-4-phosphate dehydrogenase</fullName>
        <ecNumber evidence="1">1.1.1.290</ecNumber>
    </recommendedName>
</protein>
<organism>
    <name type="scientific">Bacteroides fragilis (strain YCH46)</name>
    <dbReference type="NCBI Taxonomy" id="295405"/>
    <lineage>
        <taxon>Bacteria</taxon>
        <taxon>Pseudomonadati</taxon>
        <taxon>Bacteroidota</taxon>
        <taxon>Bacteroidia</taxon>
        <taxon>Bacteroidales</taxon>
        <taxon>Bacteroidaceae</taxon>
        <taxon>Bacteroides</taxon>
    </lineage>
</organism>
<sequence>MKVIVDNKIPYIREAIEQIADEVIYAPGKDFTPELVQDADALIIRTRTRCDRSLLAGSKVKFIATATIGFDHIDTAYCREAGITWTNAPGCNSASVAQYIQSTLFILQQTRGMKLNQMTIGIVGVGNVGSKVADVARKLGIQVMLNDLPREEREESTMFASLKSIAEKCDIITFHVPLYKEGKYKTYHLADKHFFHSLKKGAVIMNTSRGEVIETEALLEALRSGILSDAVIDVWEHEPDIDLELLEKVIIGTPHIAGYSADGKANATRMSLEALCRFFRIETDYRITPPEPKNKLISTATYEEASLMIYDPRRDSDALKSHPGLFEQLRGDYPLRREEGAYRIVITK</sequence>
<gene>
    <name evidence="1" type="primary">pdxB</name>
    <name type="ordered locus">BF0222</name>
</gene>
<comment type="function">
    <text evidence="1">Catalyzes the oxidation of erythronate-4-phosphate to 3-hydroxy-2-oxo-4-phosphonooxybutanoate.</text>
</comment>
<comment type="catalytic activity">
    <reaction evidence="1">
        <text>4-phospho-D-erythronate + NAD(+) = (R)-3-hydroxy-2-oxo-4-phosphooxybutanoate + NADH + H(+)</text>
        <dbReference type="Rhea" id="RHEA:18829"/>
        <dbReference type="ChEBI" id="CHEBI:15378"/>
        <dbReference type="ChEBI" id="CHEBI:57540"/>
        <dbReference type="ChEBI" id="CHEBI:57945"/>
        <dbReference type="ChEBI" id="CHEBI:58538"/>
        <dbReference type="ChEBI" id="CHEBI:58766"/>
        <dbReference type="EC" id="1.1.1.290"/>
    </reaction>
</comment>
<comment type="pathway">
    <text evidence="1">Cofactor biosynthesis; pyridoxine 5'-phosphate biosynthesis; pyridoxine 5'-phosphate from D-erythrose 4-phosphate: step 2/5.</text>
</comment>
<comment type="subunit">
    <text evidence="1">Homodimer.</text>
</comment>
<comment type="subcellular location">
    <subcellularLocation>
        <location evidence="1">Cytoplasm</location>
    </subcellularLocation>
</comment>
<comment type="similarity">
    <text evidence="1">Belongs to the D-isomer specific 2-hydroxyacid dehydrogenase family. PdxB subfamily.</text>
</comment>
<reference key="1">
    <citation type="journal article" date="2004" name="Proc. Natl. Acad. Sci. U.S.A.">
        <title>Genomic analysis of Bacteroides fragilis reveals extensive DNA inversions regulating cell surface adaptation.</title>
        <authorList>
            <person name="Kuwahara T."/>
            <person name="Yamashita A."/>
            <person name="Hirakawa H."/>
            <person name="Nakayama H."/>
            <person name="Toh H."/>
            <person name="Okada N."/>
            <person name="Kuhara S."/>
            <person name="Hattori M."/>
            <person name="Hayashi T."/>
            <person name="Ohnishi Y."/>
        </authorList>
    </citation>
    <scope>NUCLEOTIDE SEQUENCE [LARGE SCALE GENOMIC DNA]</scope>
    <source>
        <strain>YCH46</strain>
    </source>
</reference>
<proteinExistence type="inferred from homology"/>
<feature type="chain" id="PRO_0000297433" description="Erythronate-4-phosphate dehydrogenase">
    <location>
        <begin position="1"/>
        <end position="348"/>
    </location>
</feature>
<feature type="active site" evidence="1">
    <location>
        <position position="209"/>
    </location>
</feature>
<feature type="active site" evidence="1">
    <location>
        <position position="238"/>
    </location>
</feature>
<feature type="active site" description="Proton donor" evidence="1">
    <location>
        <position position="255"/>
    </location>
</feature>
<feature type="binding site" evidence="1">
    <location>
        <position position="46"/>
    </location>
    <ligand>
        <name>substrate</name>
    </ligand>
</feature>
<feature type="binding site" evidence="1">
    <location>
        <position position="67"/>
    </location>
    <ligand>
        <name>substrate</name>
    </ligand>
</feature>
<feature type="binding site" evidence="1">
    <location>
        <position position="147"/>
    </location>
    <ligand>
        <name>NAD(+)</name>
        <dbReference type="ChEBI" id="CHEBI:57540"/>
    </ligand>
</feature>
<feature type="binding site" evidence="1">
    <location>
        <position position="233"/>
    </location>
    <ligand>
        <name>NAD(+)</name>
        <dbReference type="ChEBI" id="CHEBI:57540"/>
    </ligand>
</feature>
<feature type="binding site" evidence="1">
    <location>
        <position position="258"/>
    </location>
    <ligand>
        <name>NAD(+)</name>
        <dbReference type="ChEBI" id="CHEBI:57540"/>
    </ligand>
</feature>
<feature type="binding site" evidence="1">
    <location>
        <position position="259"/>
    </location>
    <ligand>
        <name>substrate</name>
    </ligand>
</feature>